<accession>Q1MJ62</accession>
<gene>
    <name evidence="1" type="primary">smpB</name>
    <name type="ordered locus">RL1503</name>
</gene>
<sequence length="151" mass="17681">MVNKVVAENRKARFNYEIIDTYEAGIVLMGTEVKSLREGKANIAESYASDEGGEIWLINSYLPEYLQANRFNHEPRRRRKLLLSGREIHRLRSAINREGMTLIPLKIYFNDRGRAKMELALAKGKKLHDKRESEKERDWNRQKSRLLKAHG</sequence>
<name>SSRP_RHIJ3</name>
<feature type="chain" id="PRO_0000331083" description="SsrA-binding protein">
    <location>
        <begin position="1"/>
        <end position="151"/>
    </location>
</feature>
<feature type="region of interest" description="Disordered" evidence="2">
    <location>
        <begin position="124"/>
        <end position="151"/>
    </location>
</feature>
<feature type="compositionally biased region" description="Basic and acidic residues" evidence="2">
    <location>
        <begin position="129"/>
        <end position="141"/>
    </location>
</feature>
<feature type="compositionally biased region" description="Basic residues" evidence="2">
    <location>
        <begin position="142"/>
        <end position="151"/>
    </location>
</feature>
<organism>
    <name type="scientific">Rhizobium johnstonii (strain DSM 114642 / LMG 32736 / 3841)</name>
    <name type="common">Rhizobium leguminosarum bv. viciae</name>
    <dbReference type="NCBI Taxonomy" id="216596"/>
    <lineage>
        <taxon>Bacteria</taxon>
        <taxon>Pseudomonadati</taxon>
        <taxon>Pseudomonadota</taxon>
        <taxon>Alphaproteobacteria</taxon>
        <taxon>Hyphomicrobiales</taxon>
        <taxon>Rhizobiaceae</taxon>
        <taxon>Rhizobium/Agrobacterium group</taxon>
        <taxon>Rhizobium</taxon>
        <taxon>Rhizobium johnstonii</taxon>
    </lineage>
</organism>
<keyword id="KW-0963">Cytoplasm</keyword>
<keyword id="KW-0694">RNA-binding</keyword>
<evidence type="ECO:0000255" key="1">
    <source>
        <dbReference type="HAMAP-Rule" id="MF_00023"/>
    </source>
</evidence>
<evidence type="ECO:0000256" key="2">
    <source>
        <dbReference type="SAM" id="MobiDB-lite"/>
    </source>
</evidence>
<protein>
    <recommendedName>
        <fullName evidence="1">SsrA-binding protein</fullName>
    </recommendedName>
    <alternativeName>
        <fullName evidence="1">Small protein B</fullName>
    </alternativeName>
</protein>
<comment type="function">
    <text evidence="1">Required for rescue of stalled ribosomes mediated by trans-translation. Binds to transfer-messenger RNA (tmRNA), required for stable association of tmRNA with ribosomes. tmRNA and SmpB together mimic tRNA shape, replacing the anticodon stem-loop with SmpB. tmRNA is encoded by the ssrA gene; the 2 termini fold to resemble tRNA(Ala) and it encodes a 'tag peptide', a short internal open reading frame. During trans-translation Ala-aminoacylated tmRNA acts like a tRNA, entering the A-site of stalled ribosomes, displacing the stalled mRNA. The ribosome then switches to translate the ORF on the tmRNA; the nascent peptide is terminated with the 'tag peptide' encoded by the tmRNA and targeted for degradation. The ribosome is freed to recommence translation, which seems to be the essential function of trans-translation.</text>
</comment>
<comment type="subcellular location">
    <subcellularLocation>
        <location evidence="1">Cytoplasm</location>
    </subcellularLocation>
    <text evidence="1">The tmRNA-SmpB complex associates with stalled 70S ribosomes.</text>
</comment>
<comment type="similarity">
    <text evidence="1">Belongs to the SmpB family.</text>
</comment>
<dbReference type="EMBL" id="AM236080">
    <property type="protein sequence ID" value="CAK06998.1"/>
    <property type="molecule type" value="Genomic_DNA"/>
</dbReference>
<dbReference type="SMR" id="Q1MJ62"/>
<dbReference type="EnsemblBacteria" id="CAK06998">
    <property type="protein sequence ID" value="CAK06998"/>
    <property type="gene ID" value="RL1503"/>
</dbReference>
<dbReference type="KEGG" id="rle:RL1503"/>
<dbReference type="eggNOG" id="COG0691">
    <property type="taxonomic scope" value="Bacteria"/>
</dbReference>
<dbReference type="HOGENOM" id="CLU_108953_0_1_5"/>
<dbReference type="Proteomes" id="UP000006575">
    <property type="component" value="Chromosome"/>
</dbReference>
<dbReference type="GO" id="GO:0005829">
    <property type="term" value="C:cytosol"/>
    <property type="evidence" value="ECO:0007669"/>
    <property type="project" value="TreeGrafter"/>
</dbReference>
<dbReference type="GO" id="GO:0003723">
    <property type="term" value="F:RNA binding"/>
    <property type="evidence" value="ECO:0007669"/>
    <property type="project" value="UniProtKB-UniRule"/>
</dbReference>
<dbReference type="GO" id="GO:0070929">
    <property type="term" value="P:trans-translation"/>
    <property type="evidence" value="ECO:0007669"/>
    <property type="project" value="UniProtKB-UniRule"/>
</dbReference>
<dbReference type="CDD" id="cd09294">
    <property type="entry name" value="SmpB"/>
    <property type="match status" value="1"/>
</dbReference>
<dbReference type="Gene3D" id="2.40.280.10">
    <property type="match status" value="1"/>
</dbReference>
<dbReference type="HAMAP" id="MF_00023">
    <property type="entry name" value="SmpB"/>
    <property type="match status" value="1"/>
</dbReference>
<dbReference type="InterPro" id="IPR023620">
    <property type="entry name" value="SmpB"/>
</dbReference>
<dbReference type="InterPro" id="IPR000037">
    <property type="entry name" value="SsrA-bd_prot"/>
</dbReference>
<dbReference type="InterPro" id="IPR020081">
    <property type="entry name" value="SsrA-bd_prot_CS"/>
</dbReference>
<dbReference type="NCBIfam" id="NF003843">
    <property type="entry name" value="PRK05422.1"/>
    <property type="match status" value="1"/>
</dbReference>
<dbReference type="NCBIfam" id="TIGR00086">
    <property type="entry name" value="smpB"/>
    <property type="match status" value="1"/>
</dbReference>
<dbReference type="PANTHER" id="PTHR30308:SF2">
    <property type="entry name" value="SSRA-BINDING PROTEIN"/>
    <property type="match status" value="1"/>
</dbReference>
<dbReference type="PANTHER" id="PTHR30308">
    <property type="entry name" value="TMRNA-BINDING COMPONENT OF TRANS-TRANSLATION TAGGING COMPLEX"/>
    <property type="match status" value="1"/>
</dbReference>
<dbReference type="Pfam" id="PF01668">
    <property type="entry name" value="SmpB"/>
    <property type="match status" value="1"/>
</dbReference>
<dbReference type="SUPFAM" id="SSF74982">
    <property type="entry name" value="Small protein B (SmpB)"/>
    <property type="match status" value="1"/>
</dbReference>
<dbReference type="PROSITE" id="PS01317">
    <property type="entry name" value="SSRP"/>
    <property type="match status" value="1"/>
</dbReference>
<proteinExistence type="inferred from homology"/>
<reference key="1">
    <citation type="journal article" date="2006" name="Genome Biol.">
        <title>The genome of Rhizobium leguminosarum has recognizable core and accessory components.</title>
        <authorList>
            <person name="Young J.P.W."/>
            <person name="Crossman L.C."/>
            <person name="Johnston A.W.B."/>
            <person name="Thomson N.R."/>
            <person name="Ghazoui Z.F."/>
            <person name="Hull K.H."/>
            <person name="Wexler M."/>
            <person name="Curson A.R.J."/>
            <person name="Todd J.D."/>
            <person name="Poole P.S."/>
            <person name="Mauchline T.H."/>
            <person name="East A.K."/>
            <person name="Quail M.A."/>
            <person name="Churcher C."/>
            <person name="Arrowsmith C."/>
            <person name="Cherevach I."/>
            <person name="Chillingworth T."/>
            <person name="Clarke K."/>
            <person name="Cronin A."/>
            <person name="Davis P."/>
            <person name="Fraser A."/>
            <person name="Hance Z."/>
            <person name="Hauser H."/>
            <person name="Jagels K."/>
            <person name="Moule S."/>
            <person name="Mungall K."/>
            <person name="Norbertczak H."/>
            <person name="Rabbinowitsch E."/>
            <person name="Sanders M."/>
            <person name="Simmonds M."/>
            <person name="Whitehead S."/>
            <person name="Parkhill J."/>
        </authorList>
    </citation>
    <scope>NUCLEOTIDE SEQUENCE [LARGE SCALE GENOMIC DNA]</scope>
    <source>
        <strain>DSM 114642 / LMG 32736 / 3841</strain>
    </source>
</reference>